<organism>
    <name type="scientific">Variovorax paradoxus (strain S110)</name>
    <dbReference type="NCBI Taxonomy" id="543728"/>
    <lineage>
        <taxon>Bacteria</taxon>
        <taxon>Pseudomonadati</taxon>
        <taxon>Pseudomonadota</taxon>
        <taxon>Betaproteobacteria</taxon>
        <taxon>Burkholderiales</taxon>
        <taxon>Comamonadaceae</taxon>
        <taxon>Variovorax</taxon>
    </lineage>
</organism>
<dbReference type="EC" id="2.7.7.8" evidence="1"/>
<dbReference type="EMBL" id="CP001635">
    <property type="protein sequence ID" value="ACS20131.1"/>
    <property type="molecule type" value="Genomic_DNA"/>
</dbReference>
<dbReference type="SMR" id="C5CT24"/>
<dbReference type="STRING" id="543728.Vapar_3514"/>
<dbReference type="KEGG" id="vap:Vapar_3514"/>
<dbReference type="eggNOG" id="COG1185">
    <property type="taxonomic scope" value="Bacteria"/>
</dbReference>
<dbReference type="HOGENOM" id="CLU_004217_2_2_4"/>
<dbReference type="OrthoDB" id="9804305at2"/>
<dbReference type="GO" id="GO:0005829">
    <property type="term" value="C:cytosol"/>
    <property type="evidence" value="ECO:0007669"/>
    <property type="project" value="TreeGrafter"/>
</dbReference>
<dbReference type="GO" id="GO:0000175">
    <property type="term" value="F:3'-5'-RNA exonuclease activity"/>
    <property type="evidence" value="ECO:0007669"/>
    <property type="project" value="TreeGrafter"/>
</dbReference>
<dbReference type="GO" id="GO:0000287">
    <property type="term" value="F:magnesium ion binding"/>
    <property type="evidence" value="ECO:0007669"/>
    <property type="project" value="UniProtKB-UniRule"/>
</dbReference>
<dbReference type="GO" id="GO:0004654">
    <property type="term" value="F:polyribonucleotide nucleotidyltransferase activity"/>
    <property type="evidence" value="ECO:0007669"/>
    <property type="project" value="UniProtKB-UniRule"/>
</dbReference>
<dbReference type="GO" id="GO:0003723">
    <property type="term" value="F:RNA binding"/>
    <property type="evidence" value="ECO:0007669"/>
    <property type="project" value="UniProtKB-UniRule"/>
</dbReference>
<dbReference type="GO" id="GO:0006402">
    <property type="term" value="P:mRNA catabolic process"/>
    <property type="evidence" value="ECO:0007669"/>
    <property type="project" value="UniProtKB-UniRule"/>
</dbReference>
<dbReference type="GO" id="GO:0006396">
    <property type="term" value="P:RNA processing"/>
    <property type="evidence" value="ECO:0007669"/>
    <property type="project" value="InterPro"/>
</dbReference>
<dbReference type="CDD" id="cd02393">
    <property type="entry name" value="KH-I_PNPase"/>
    <property type="match status" value="1"/>
</dbReference>
<dbReference type="CDD" id="cd11363">
    <property type="entry name" value="RNase_PH_PNPase_1"/>
    <property type="match status" value="1"/>
</dbReference>
<dbReference type="CDD" id="cd11364">
    <property type="entry name" value="RNase_PH_PNPase_2"/>
    <property type="match status" value="1"/>
</dbReference>
<dbReference type="CDD" id="cd04472">
    <property type="entry name" value="S1_PNPase"/>
    <property type="match status" value="1"/>
</dbReference>
<dbReference type="FunFam" id="2.40.50.140:FF:000023">
    <property type="entry name" value="Polyribonucleotide nucleotidyltransferase"/>
    <property type="match status" value="1"/>
</dbReference>
<dbReference type="FunFam" id="3.30.1370.10:FF:000001">
    <property type="entry name" value="Polyribonucleotide nucleotidyltransferase"/>
    <property type="match status" value="1"/>
</dbReference>
<dbReference type="FunFam" id="3.30.230.70:FF:000001">
    <property type="entry name" value="Polyribonucleotide nucleotidyltransferase"/>
    <property type="match status" value="1"/>
</dbReference>
<dbReference type="FunFam" id="3.30.230.70:FF:000002">
    <property type="entry name" value="Polyribonucleotide nucleotidyltransferase"/>
    <property type="match status" value="1"/>
</dbReference>
<dbReference type="Gene3D" id="3.30.230.70">
    <property type="entry name" value="GHMP Kinase, N-terminal domain"/>
    <property type="match status" value="2"/>
</dbReference>
<dbReference type="Gene3D" id="3.30.1370.10">
    <property type="entry name" value="K Homology domain, type 1"/>
    <property type="match status" value="1"/>
</dbReference>
<dbReference type="Gene3D" id="2.40.50.140">
    <property type="entry name" value="Nucleic acid-binding proteins"/>
    <property type="match status" value="1"/>
</dbReference>
<dbReference type="HAMAP" id="MF_01595">
    <property type="entry name" value="PNPase"/>
    <property type="match status" value="1"/>
</dbReference>
<dbReference type="InterPro" id="IPR001247">
    <property type="entry name" value="ExoRNase_PH_dom1"/>
</dbReference>
<dbReference type="InterPro" id="IPR015847">
    <property type="entry name" value="ExoRNase_PH_dom2"/>
</dbReference>
<dbReference type="InterPro" id="IPR036345">
    <property type="entry name" value="ExoRNase_PH_dom2_sf"/>
</dbReference>
<dbReference type="InterPro" id="IPR004087">
    <property type="entry name" value="KH_dom"/>
</dbReference>
<dbReference type="InterPro" id="IPR004088">
    <property type="entry name" value="KH_dom_type_1"/>
</dbReference>
<dbReference type="InterPro" id="IPR036612">
    <property type="entry name" value="KH_dom_type_1_sf"/>
</dbReference>
<dbReference type="InterPro" id="IPR012340">
    <property type="entry name" value="NA-bd_OB-fold"/>
</dbReference>
<dbReference type="InterPro" id="IPR012162">
    <property type="entry name" value="PNPase"/>
</dbReference>
<dbReference type="InterPro" id="IPR027408">
    <property type="entry name" value="PNPase/RNase_PH_dom_sf"/>
</dbReference>
<dbReference type="InterPro" id="IPR015848">
    <property type="entry name" value="PNPase_PH_RNA-bd_bac/org-type"/>
</dbReference>
<dbReference type="InterPro" id="IPR020568">
    <property type="entry name" value="Ribosomal_Su5_D2-typ_SF"/>
</dbReference>
<dbReference type="InterPro" id="IPR003029">
    <property type="entry name" value="S1_domain"/>
</dbReference>
<dbReference type="NCBIfam" id="TIGR03591">
    <property type="entry name" value="polynuc_phos"/>
    <property type="match status" value="1"/>
</dbReference>
<dbReference type="NCBIfam" id="NF008805">
    <property type="entry name" value="PRK11824.1"/>
    <property type="match status" value="1"/>
</dbReference>
<dbReference type="PANTHER" id="PTHR11252">
    <property type="entry name" value="POLYRIBONUCLEOTIDE NUCLEOTIDYLTRANSFERASE"/>
    <property type="match status" value="1"/>
</dbReference>
<dbReference type="PANTHER" id="PTHR11252:SF0">
    <property type="entry name" value="POLYRIBONUCLEOTIDE NUCLEOTIDYLTRANSFERASE 1, MITOCHONDRIAL"/>
    <property type="match status" value="1"/>
</dbReference>
<dbReference type="Pfam" id="PF00013">
    <property type="entry name" value="KH_1"/>
    <property type="match status" value="1"/>
</dbReference>
<dbReference type="Pfam" id="PF03726">
    <property type="entry name" value="PNPase"/>
    <property type="match status" value="1"/>
</dbReference>
<dbReference type="Pfam" id="PF01138">
    <property type="entry name" value="RNase_PH"/>
    <property type="match status" value="2"/>
</dbReference>
<dbReference type="Pfam" id="PF03725">
    <property type="entry name" value="RNase_PH_C"/>
    <property type="match status" value="2"/>
</dbReference>
<dbReference type="Pfam" id="PF00575">
    <property type="entry name" value="S1"/>
    <property type="match status" value="1"/>
</dbReference>
<dbReference type="PIRSF" id="PIRSF005499">
    <property type="entry name" value="PNPase"/>
    <property type="match status" value="1"/>
</dbReference>
<dbReference type="SMART" id="SM00322">
    <property type="entry name" value="KH"/>
    <property type="match status" value="1"/>
</dbReference>
<dbReference type="SMART" id="SM00316">
    <property type="entry name" value="S1"/>
    <property type="match status" value="1"/>
</dbReference>
<dbReference type="SUPFAM" id="SSF54791">
    <property type="entry name" value="Eukaryotic type KH-domain (KH-domain type I)"/>
    <property type="match status" value="1"/>
</dbReference>
<dbReference type="SUPFAM" id="SSF50249">
    <property type="entry name" value="Nucleic acid-binding proteins"/>
    <property type="match status" value="1"/>
</dbReference>
<dbReference type="SUPFAM" id="SSF55666">
    <property type="entry name" value="Ribonuclease PH domain 2-like"/>
    <property type="match status" value="2"/>
</dbReference>
<dbReference type="SUPFAM" id="SSF54211">
    <property type="entry name" value="Ribosomal protein S5 domain 2-like"/>
    <property type="match status" value="2"/>
</dbReference>
<dbReference type="PROSITE" id="PS50084">
    <property type="entry name" value="KH_TYPE_1"/>
    <property type="match status" value="1"/>
</dbReference>
<dbReference type="PROSITE" id="PS50126">
    <property type="entry name" value="S1"/>
    <property type="match status" value="1"/>
</dbReference>
<comment type="function">
    <text evidence="1">Involved in mRNA degradation. Catalyzes the phosphorolysis of single-stranded polyribonucleotides processively in the 3'- to 5'-direction.</text>
</comment>
<comment type="catalytic activity">
    <reaction evidence="1">
        <text>RNA(n+1) + phosphate = RNA(n) + a ribonucleoside 5'-diphosphate</text>
        <dbReference type="Rhea" id="RHEA:22096"/>
        <dbReference type="Rhea" id="RHEA-COMP:14527"/>
        <dbReference type="Rhea" id="RHEA-COMP:17342"/>
        <dbReference type="ChEBI" id="CHEBI:43474"/>
        <dbReference type="ChEBI" id="CHEBI:57930"/>
        <dbReference type="ChEBI" id="CHEBI:140395"/>
        <dbReference type="EC" id="2.7.7.8"/>
    </reaction>
</comment>
<comment type="cofactor">
    <cofactor evidence="1">
        <name>Mg(2+)</name>
        <dbReference type="ChEBI" id="CHEBI:18420"/>
    </cofactor>
</comment>
<comment type="subcellular location">
    <subcellularLocation>
        <location evidence="1">Cytoplasm</location>
    </subcellularLocation>
</comment>
<comment type="similarity">
    <text evidence="1">Belongs to the polyribonucleotide nucleotidyltransferase family.</text>
</comment>
<accession>C5CT24</accession>
<keyword id="KW-0963">Cytoplasm</keyword>
<keyword id="KW-0460">Magnesium</keyword>
<keyword id="KW-0479">Metal-binding</keyword>
<keyword id="KW-0548">Nucleotidyltransferase</keyword>
<keyword id="KW-0694">RNA-binding</keyword>
<keyword id="KW-0808">Transferase</keyword>
<name>PNP_VARPS</name>
<proteinExistence type="inferred from homology"/>
<reference key="1">
    <citation type="journal article" date="2011" name="J. Bacteriol.">
        <title>Complete genome sequence of the metabolically versatile plant growth-promoting endophyte, Variovorax paradoxus S110.</title>
        <authorList>
            <person name="Han J.I."/>
            <person name="Choi H.K."/>
            <person name="Lee S.W."/>
            <person name="Orwin P.M."/>
            <person name="Kim J."/>
            <person name="Laroe S.L."/>
            <person name="Kim T.G."/>
            <person name="O'Neil J."/>
            <person name="Leadbetter J.R."/>
            <person name="Lee S.Y."/>
            <person name="Hur C.G."/>
            <person name="Spain J.C."/>
            <person name="Ovchinnikova G."/>
            <person name="Goodwin L."/>
            <person name="Han C."/>
        </authorList>
    </citation>
    <scope>NUCLEOTIDE SEQUENCE [LARGE SCALE GENOMIC DNA]</scope>
    <source>
        <strain>S110</strain>
    </source>
</reference>
<protein>
    <recommendedName>
        <fullName evidence="1">Polyribonucleotide nucleotidyltransferase</fullName>
        <ecNumber evidence="1">2.7.7.8</ecNumber>
    </recommendedName>
    <alternativeName>
        <fullName evidence="1">Polynucleotide phosphorylase</fullName>
        <shortName evidence="1">PNPase</shortName>
    </alternativeName>
</protein>
<feature type="chain" id="PRO_1000215672" description="Polyribonucleotide nucleotidyltransferase">
    <location>
        <begin position="1"/>
        <end position="772"/>
    </location>
</feature>
<feature type="domain" description="KH" evidence="1">
    <location>
        <begin position="555"/>
        <end position="614"/>
    </location>
</feature>
<feature type="domain" description="S1 motif" evidence="1">
    <location>
        <begin position="624"/>
        <end position="692"/>
    </location>
</feature>
<feature type="region of interest" description="Disordered" evidence="2">
    <location>
        <begin position="690"/>
        <end position="772"/>
    </location>
</feature>
<feature type="compositionally biased region" description="Basic and acidic residues" evidence="2">
    <location>
        <begin position="703"/>
        <end position="740"/>
    </location>
</feature>
<feature type="compositionally biased region" description="Low complexity" evidence="2">
    <location>
        <begin position="743"/>
        <end position="757"/>
    </location>
</feature>
<feature type="binding site" evidence="1">
    <location>
        <position position="488"/>
    </location>
    <ligand>
        <name>Mg(2+)</name>
        <dbReference type="ChEBI" id="CHEBI:18420"/>
    </ligand>
</feature>
<feature type="binding site" evidence="1">
    <location>
        <position position="494"/>
    </location>
    <ligand>
        <name>Mg(2+)</name>
        <dbReference type="ChEBI" id="CHEBI:18420"/>
    </ligand>
</feature>
<sequence length="772" mass="84330">MSLFNKVTKSFQWGDKTVVMETGEIARQASGAVVVDIDGTVILATVVASKTAKPGQDFFPLTVDYIEKTYAAGKIPGSFFKREAKPSEHETLTSRLIDRPIRPLFPEGFLNEVHVVIHTLSLNPEVDADIAAMIGVSAALSISGIPFSGPIGAARVGYINGQYVLNPGQTARKDSQMDLVVAGTEAAVLMVESEAQQLSEEIMLGGVVFGHEQANIAINAIHELVRDAGKPVWDWQAPAEDEAFVAKVKSLAEEKLRAVYQIRSKQARTQALREANASVMNTLKESGEPFDAGKVNDLLFAIESKIVRSQILSGEPRIDGRDTRTVRPIEIRNSVLPRTHGSALFTRGETQGLVVTTLGTERDAQRIDALAGEYEDRFLFHYNMPPFATGEVGRMGSTKRREIGHGRLAKRALVAVLPTKEEFPYTIRVVSEITESNGSSSMASVCGGCLSMMDAGVPMKAHVAGIAMGLIKEDNRFAVLTDILGDEDHLGDMDFKVAGTTNGITALQMDIKIQGITKEIMQVALAQAKEARMHILGKMQEAMGEAKTEVSQFAPRLTTLKINPEKIRDVIGKGGAVIRGLQEETGTTINIDEDGTITIASTDPEKAEFAKKRIEQITAEVEIGKVYEGPVTKILDFGALINLLPGKDGLLHISQIAHERVEKVTDYLSEGQIVKVKVLETDEKGRVKLSMKALTERPAGMEYSERPPREDRGDRGDRGGERRERSDRGDRGGDRGERAPRFNSEQQQQPRSNEQQPAPVGEQPYAPRDSQE</sequence>
<evidence type="ECO:0000255" key="1">
    <source>
        <dbReference type="HAMAP-Rule" id="MF_01595"/>
    </source>
</evidence>
<evidence type="ECO:0000256" key="2">
    <source>
        <dbReference type="SAM" id="MobiDB-lite"/>
    </source>
</evidence>
<gene>
    <name evidence="1" type="primary">pnp</name>
    <name type="ordered locus">Vapar_3514</name>
</gene>